<sequence>MLKCGMTGGQVKVFGKAVQTLSRVSDELWLDPSEKGLALRSVNSCHSTYGYVLFSSMFFQHYQWSPFATMSDTDLPLNLNCKLAIKSVLPIFRCLNYLERSVEKCTVVARADKCRVVIQFFGKHGIKRTHNVYFQDSQPLKIIFEKSLCANILMIKPRLLTEAIALLTSNQEEVTFSVTPGNFCLKSLSGELLDLTSSVYSEMSFGPEEFDFFQVGLDTEITFCFKELKGILTFSEVMHAPLAIYFDFPGKPVVLSVEDMLLEANFILATLVDYPSRTSSPQLLPLSQARRSHPIQSSAPEDKSRVSQTPESISRAAPKRLFPKDSPDSSSAAETKRASAGQDDIFEVPESVVSDMEEERSPSHLRKFSCMFFGAVSCEQQEYAGHPLDSLAVASDSEEDVSG</sequence>
<accession>Q6WBX7</accession>
<protein>
    <recommendedName>
        <fullName>Cell cycle checkpoint control protein RAD9B</fullName>
    </recommendedName>
    <alternativeName>
        <fullName>DNA repair exonuclease rad9 homolog B</fullName>
        <shortName>mRAD9B</shortName>
    </alternativeName>
</protein>
<gene>
    <name type="primary">Rad9b</name>
</gene>
<proteinExistence type="evidence at protein level"/>
<comment type="subunit">
    <text evidence="1">Interacts with HUS1, HUS1B, RAD1, RAD9A and RAD17.</text>
</comment>
<comment type="similarity">
    <text evidence="3">Belongs to the rad9 family.</text>
</comment>
<feature type="chain" id="PRO_0000226700" description="Cell cycle checkpoint control protein RAD9B">
    <location>
        <begin position="1"/>
        <end position="403"/>
    </location>
</feature>
<feature type="region of interest" description="Disordered" evidence="2">
    <location>
        <begin position="285"/>
        <end position="347"/>
    </location>
</feature>
<feature type="modified residue" description="Phosphoserine" evidence="4">
    <location>
        <position position="354"/>
    </location>
</feature>
<feature type="modified residue" description="Phosphoserine" evidence="4">
    <location>
        <position position="363"/>
    </location>
</feature>
<evidence type="ECO:0000250" key="1"/>
<evidence type="ECO:0000256" key="2">
    <source>
        <dbReference type="SAM" id="MobiDB-lite"/>
    </source>
</evidence>
<evidence type="ECO:0000305" key="3"/>
<evidence type="ECO:0007744" key="4">
    <source>
    </source>
</evidence>
<name>RAD9B_MOUSE</name>
<keyword id="KW-0597">Phosphoprotein</keyword>
<keyword id="KW-1185">Reference proteome</keyword>
<organism>
    <name type="scientific">Mus musculus</name>
    <name type="common">Mouse</name>
    <dbReference type="NCBI Taxonomy" id="10090"/>
    <lineage>
        <taxon>Eukaryota</taxon>
        <taxon>Metazoa</taxon>
        <taxon>Chordata</taxon>
        <taxon>Craniata</taxon>
        <taxon>Vertebrata</taxon>
        <taxon>Euteleostomi</taxon>
        <taxon>Mammalia</taxon>
        <taxon>Eutheria</taxon>
        <taxon>Euarchontoglires</taxon>
        <taxon>Glires</taxon>
        <taxon>Rodentia</taxon>
        <taxon>Myomorpha</taxon>
        <taxon>Muroidea</taxon>
        <taxon>Muridae</taxon>
        <taxon>Murinae</taxon>
        <taxon>Mus</taxon>
        <taxon>Mus</taxon>
    </lineage>
</organism>
<dbReference type="EMBL" id="AY297460">
    <property type="protein sequence ID" value="AAQ62860.1"/>
    <property type="molecule type" value="mRNA"/>
</dbReference>
<dbReference type="CCDS" id="CCDS19646.1"/>
<dbReference type="RefSeq" id="NP_659161.2">
    <property type="nucleotide sequence ID" value="NM_144912.4"/>
</dbReference>
<dbReference type="SMR" id="Q6WBX7"/>
<dbReference type="DIP" id="DIP-59316N"/>
<dbReference type="FunCoup" id="Q6WBX7">
    <property type="interactions" value="1373"/>
</dbReference>
<dbReference type="IntAct" id="Q6WBX7">
    <property type="interactions" value="1"/>
</dbReference>
<dbReference type="STRING" id="10090.ENSMUSP00000036177"/>
<dbReference type="GlyGen" id="Q6WBX7">
    <property type="glycosylation" value="2 sites, 1 O-linked glycan (1 site)"/>
</dbReference>
<dbReference type="iPTMnet" id="Q6WBX7"/>
<dbReference type="PhosphoSitePlus" id="Q6WBX7"/>
<dbReference type="PaxDb" id="10090-ENSMUSP00000036177"/>
<dbReference type="ProteomicsDB" id="300389"/>
<dbReference type="Antibodypedia" id="31019">
    <property type="antibodies" value="82 antibodies from 19 providers"/>
</dbReference>
<dbReference type="DNASU" id="231724"/>
<dbReference type="Ensembl" id="ENSMUST00000049009.7">
    <property type="protein sequence ID" value="ENSMUSP00000036177.7"/>
    <property type="gene ID" value="ENSMUSG00000038569.14"/>
</dbReference>
<dbReference type="GeneID" id="231724"/>
<dbReference type="KEGG" id="mmu:231724"/>
<dbReference type="UCSC" id="uc008zkz.1">
    <property type="organism name" value="mouse"/>
</dbReference>
<dbReference type="AGR" id="MGI:2385231"/>
<dbReference type="CTD" id="144715"/>
<dbReference type="MGI" id="MGI:2385231">
    <property type="gene designation" value="Rad9b"/>
</dbReference>
<dbReference type="VEuPathDB" id="HostDB:ENSMUSG00000038569"/>
<dbReference type="eggNOG" id="KOG2810">
    <property type="taxonomic scope" value="Eukaryota"/>
</dbReference>
<dbReference type="GeneTree" id="ENSGT00390000005767"/>
<dbReference type="HOGENOM" id="CLU_049242_2_0_1"/>
<dbReference type="InParanoid" id="Q6WBX7"/>
<dbReference type="OMA" id="RTRQHHL"/>
<dbReference type="OrthoDB" id="60092at2759"/>
<dbReference type="PhylomeDB" id="Q6WBX7"/>
<dbReference type="TreeFam" id="TF101212"/>
<dbReference type="Reactome" id="R-MMU-176187">
    <property type="pathway name" value="Activation of ATR in response to replication stress"/>
</dbReference>
<dbReference type="Reactome" id="R-MMU-5685938">
    <property type="pathway name" value="HDR through Single Strand Annealing (SSA)"/>
</dbReference>
<dbReference type="Reactome" id="R-MMU-5693607">
    <property type="pathway name" value="Processing of DNA double-strand break ends"/>
</dbReference>
<dbReference type="Reactome" id="R-MMU-6804756">
    <property type="pathway name" value="Regulation of TP53 Activity through Phosphorylation"/>
</dbReference>
<dbReference type="Reactome" id="R-MMU-69473">
    <property type="pathway name" value="G2/M DNA damage checkpoint"/>
</dbReference>
<dbReference type="BioGRID-ORCS" id="231724">
    <property type="hits" value="1 hit in 114 CRISPR screens"/>
</dbReference>
<dbReference type="ChiTaRS" id="Rad9b">
    <property type="organism name" value="mouse"/>
</dbReference>
<dbReference type="PRO" id="PR:Q6WBX7"/>
<dbReference type="Proteomes" id="UP000000589">
    <property type="component" value="Chromosome 5"/>
</dbReference>
<dbReference type="RNAct" id="Q6WBX7">
    <property type="molecule type" value="protein"/>
</dbReference>
<dbReference type="Bgee" id="ENSMUSG00000038569">
    <property type="expression patterns" value="Expressed in spermatocyte and 80 other cell types or tissues"/>
</dbReference>
<dbReference type="ExpressionAtlas" id="Q6WBX7">
    <property type="expression patterns" value="baseline and differential"/>
</dbReference>
<dbReference type="GO" id="GO:0030896">
    <property type="term" value="C:checkpoint clamp complex"/>
    <property type="evidence" value="ECO:0007669"/>
    <property type="project" value="InterPro"/>
</dbReference>
<dbReference type="GO" id="GO:0005634">
    <property type="term" value="C:nucleus"/>
    <property type="evidence" value="ECO:0000266"/>
    <property type="project" value="MGI"/>
</dbReference>
<dbReference type="GO" id="GO:0000077">
    <property type="term" value="P:DNA damage checkpoint signaling"/>
    <property type="evidence" value="ECO:0007669"/>
    <property type="project" value="InterPro"/>
</dbReference>
<dbReference type="GO" id="GO:0006281">
    <property type="term" value="P:DNA repair"/>
    <property type="evidence" value="ECO:0007669"/>
    <property type="project" value="InterPro"/>
</dbReference>
<dbReference type="CDD" id="cd00577">
    <property type="entry name" value="PCNA"/>
    <property type="match status" value="1"/>
</dbReference>
<dbReference type="FunFam" id="3.70.10.10:FF:000008">
    <property type="entry name" value="Cell cycle checkpoint control protein"/>
    <property type="match status" value="1"/>
</dbReference>
<dbReference type="Gene3D" id="3.70.10.10">
    <property type="match status" value="1"/>
</dbReference>
<dbReference type="InterPro" id="IPR046938">
    <property type="entry name" value="DNA_clamp_sf"/>
</dbReference>
<dbReference type="InterPro" id="IPR026584">
    <property type="entry name" value="Rad9"/>
</dbReference>
<dbReference type="InterPro" id="IPR007268">
    <property type="entry name" value="Rad9/Ddc1"/>
</dbReference>
<dbReference type="PANTHER" id="PTHR15237:SF2">
    <property type="entry name" value="CELL CYCLE CHECKPOINT CONTROL PROTEIN RAD9B"/>
    <property type="match status" value="1"/>
</dbReference>
<dbReference type="PANTHER" id="PTHR15237">
    <property type="entry name" value="DNA REPAIR PROTEIN RAD9"/>
    <property type="match status" value="1"/>
</dbReference>
<dbReference type="Pfam" id="PF04139">
    <property type="entry name" value="Rad9"/>
    <property type="match status" value="1"/>
</dbReference>
<dbReference type="PIRSF" id="PIRSF009303">
    <property type="entry name" value="Cell_cycle_RAD9"/>
    <property type="match status" value="1"/>
</dbReference>
<dbReference type="SUPFAM" id="SSF55979">
    <property type="entry name" value="DNA clamp"/>
    <property type="match status" value="1"/>
</dbReference>
<reference key="1">
    <citation type="journal article" date="2003" name="Cancer Res.">
        <title>Expression of mammalian paralogues of HRAD9 and Mrad9 checkpoint control genes in normal and cancerous testicular tissue.</title>
        <authorList>
            <person name="Hopkins K.M."/>
            <person name="Wang X."/>
            <person name="Berlin A."/>
            <person name="Hang H."/>
            <person name="Thaker H.M."/>
            <person name="Lieberman H.B."/>
        </authorList>
    </citation>
    <scope>NUCLEOTIDE SEQUENCE [MRNA]</scope>
    <source>
        <strain>BALB/cJ</strain>
        <tissue>Testis</tissue>
    </source>
</reference>
<reference key="2">
    <citation type="journal article" date="2010" name="Cell">
        <title>A tissue-specific atlas of mouse protein phosphorylation and expression.</title>
        <authorList>
            <person name="Huttlin E.L."/>
            <person name="Jedrychowski M.P."/>
            <person name="Elias J.E."/>
            <person name="Goswami T."/>
            <person name="Rad R."/>
            <person name="Beausoleil S.A."/>
            <person name="Villen J."/>
            <person name="Haas W."/>
            <person name="Sowa M.E."/>
            <person name="Gygi S.P."/>
        </authorList>
    </citation>
    <scope>PHOSPHORYLATION [LARGE SCALE ANALYSIS] AT SER-354 AND SER-363</scope>
    <scope>IDENTIFICATION BY MASS SPECTROMETRY [LARGE SCALE ANALYSIS]</scope>
    <source>
        <tissue>Testis</tissue>
    </source>
</reference>